<protein>
    <recommendedName>
        <fullName evidence="1">CRISPR-associated endonuclease Cas9</fullName>
        <ecNumber evidence="1">3.1.-.-</ecNumber>
    </recommendedName>
</protein>
<accession>C9X1G5</accession>
<evidence type="ECO:0000255" key="1">
    <source>
        <dbReference type="HAMAP-Rule" id="MF_01480"/>
    </source>
</evidence>
<evidence type="ECO:0000255" key="2">
    <source>
        <dbReference type="PROSITE-ProRule" id="PRU01085"/>
    </source>
</evidence>
<evidence type="ECO:0000269" key="3">
    <source>
    </source>
</evidence>
<evidence type="ECO:0000269" key="4">
    <source>
    </source>
</evidence>
<evidence type="ECO:0000305" key="5"/>
<evidence type="ECO:0007829" key="6">
    <source>
        <dbReference type="PDB" id="6JDJ"/>
    </source>
</evidence>
<evidence type="ECO:0007829" key="7">
    <source>
        <dbReference type="PDB" id="6JDQ"/>
    </source>
</evidence>
<evidence type="ECO:0007829" key="8">
    <source>
        <dbReference type="PDB" id="6JDV"/>
    </source>
</evidence>
<evidence type="ECO:0007829" key="9">
    <source>
        <dbReference type="PDB" id="6JDX"/>
    </source>
</evidence>
<evidence type="ECO:0007829" key="10">
    <source>
        <dbReference type="PDB" id="6JE4"/>
    </source>
</evidence>
<evidence type="ECO:0007829" key="11">
    <source>
        <dbReference type="PDB" id="6JE9"/>
    </source>
</evidence>
<evidence type="ECO:0007829" key="12">
    <source>
        <dbReference type="PDB" id="6KC7"/>
    </source>
</evidence>
<evidence type="ECO:0007829" key="13">
    <source>
        <dbReference type="PDB" id="6KC8"/>
    </source>
</evidence>
<evidence type="ECO:0007829" key="14">
    <source>
        <dbReference type="PDB" id="8HJ4"/>
    </source>
</evidence>
<keyword id="KW-0002">3D-structure</keyword>
<keyword id="KW-0051">Antiviral defense</keyword>
<keyword id="KW-0238">DNA-binding</keyword>
<keyword id="KW-0255">Endonuclease</keyword>
<keyword id="KW-0378">Hydrolase</keyword>
<keyword id="KW-0460">Magnesium</keyword>
<keyword id="KW-0464">Manganese</keyword>
<keyword id="KW-0479">Metal-binding</keyword>
<keyword id="KW-0540">Nuclease</keyword>
<keyword id="KW-0694">RNA-binding</keyword>
<dbReference type="EC" id="3.1.-.-" evidence="1"/>
<dbReference type="EMBL" id="FM999788">
    <property type="protein sequence ID" value="CAX50779.1"/>
    <property type="molecule type" value="Genomic_DNA"/>
</dbReference>
<dbReference type="RefSeq" id="WP_014574210.1">
    <property type="nucleotide sequence ID" value="NC_017501.1"/>
</dbReference>
<dbReference type="PDB" id="6J9M">
    <property type="method" value="X-ray"/>
    <property type="resolution" value="2.39 A"/>
    <property type="chains" value="A/F=51-123"/>
</dbReference>
<dbReference type="PDB" id="6JDJ">
    <property type="method" value="X-ray"/>
    <property type="resolution" value="2.60 A"/>
    <property type="chains" value="C=1-77"/>
</dbReference>
<dbReference type="PDB" id="6JDQ">
    <property type="method" value="X-ray"/>
    <property type="resolution" value="2.95 A"/>
    <property type="chains" value="A=1-1082"/>
</dbReference>
<dbReference type="PDB" id="6JDV">
    <property type="method" value="X-ray"/>
    <property type="resolution" value="3.10 A"/>
    <property type="chains" value="A=1-1082"/>
</dbReference>
<dbReference type="PDB" id="6JDX">
    <property type="method" value="X-ray"/>
    <property type="resolution" value="2.28 A"/>
    <property type="chains" value="C=1-77"/>
</dbReference>
<dbReference type="PDB" id="6JE4">
    <property type="method" value="X-ray"/>
    <property type="resolution" value="3.07 A"/>
    <property type="chains" value="A/E/K/O=1-1082"/>
</dbReference>
<dbReference type="PDB" id="6JE9">
    <property type="method" value="X-ray"/>
    <property type="resolution" value="3.46 A"/>
    <property type="chains" value="A/C=1-1082"/>
</dbReference>
<dbReference type="PDB" id="6KC7">
    <property type="method" value="X-ray"/>
    <property type="resolution" value="3.30 A"/>
    <property type="chains" value="A=1-1082"/>
</dbReference>
<dbReference type="PDB" id="6KC8">
    <property type="method" value="X-ray"/>
    <property type="resolution" value="2.90 A"/>
    <property type="chains" value="A=1-1082"/>
</dbReference>
<dbReference type="PDB" id="7XVO">
    <property type="method" value="X-ray"/>
    <property type="resolution" value="2.00 A"/>
    <property type="chains" value="A=249-449"/>
</dbReference>
<dbReference type="PDB" id="8HJ4">
    <property type="method" value="EM"/>
    <property type="resolution" value="3.10 A"/>
    <property type="chains" value="A=1-1082"/>
</dbReference>
<dbReference type="PDB" id="8HS8">
    <property type="method" value="X-ray"/>
    <property type="resolution" value="2.70 A"/>
    <property type="chains" value="A/B=246-453"/>
</dbReference>
<dbReference type="PDB" id="8IF0">
    <property type="method" value="X-ray"/>
    <property type="resolution" value="1.57 A"/>
    <property type="chains" value="X=508-667"/>
</dbReference>
<dbReference type="PDB" id="8JA0">
    <property type="method" value="EM"/>
    <property type="resolution" value="3.52 A"/>
    <property type="chains" value="A=1-1082"/>
</dbReference>
<dbReference type="PDBsum" id="6J9M"/>
<dbReference type="PDBsum" id="6JDJ"/>
<dbReference type="PDBsum" id="6JDQ"/>
<dbReference type="PDBsum" id="6JDV"/>
<dbReference type="PDBsum" id="6JDX"/>
<dbReference type="PDBsum" id="6JE4"/>
<dbReference type="PDBsum" id="6JE9"/>
<dbReference type="PDBsum" id="6KC7"/>
<dbReference type="PDBsum" id="6KC8"/>
<dbReference type="PDBsum" id="7XVO"/>
<dbReference type="PDBsum" id="8HJ4"/>
<dbReference type="PDBsum" id="8HS8"/>
<dbReference type="PDBsum" id="8IF0"/>
<dbReference type="PDBsum" id="8JA0"/>
<dbReference type="EMDB" id="EMD-34832"/>
<dbReference type="EMDB" id="EMD-36123"/>
<dbReference type="SMR" id="C9X1G5"/>
<dbReference type="KEGG" id="nmt:NMV_1993"/>
<dbReference type="PATRIC" id="fig|604162.3.peg.2305"/>
<dbReference type="HOGENOM" id="CLU_007514_0_0_4"/>
<dbReference type="Proteomes" id="UP000002076">
    <property type="component" value="Chromosome"/>
</dbReference>
<dbReference type="GO" id="GO:0003677">
    <property type="term" value="F:DNA binding"/>
    <property type="evidence" value="ECO:0007669"/>
    <property type="project" value="UniProtKB-KW"/>
</dbReference>
<dbReference type="GO" id="GO:0004519">
    <property type="term" value="F:endonuclease activity"/>
    <property type="evidence" value="ECO:0007669"/>
    <property type="project" value="UniProtKB-UniRule"/>
</dbReference>
<dbReference type="GO" id="GO:0046872">
    <property type="term" value="F:metal ion binding"/>
    <property type="evidence" value="ECO:0007669"/>
    <property type="project" value="UniProtKB-UniRule"/>
</dbReference>
<dbReference type="GO" id="GO:0003723">
    <property type="term" value="F:RNA binding"/>
    <property type="evidence" value="ECO:0007669"/>
    <property type="project" value="UniProtKB-KW"/>
</dbReference>
<dbReference type="GO" id="GO:0051607">
    <property type="term" value="P:defense response to virus"/>
    <property type="evidence" value="ECO:0007669"/>
    <property type="project" value="UniProtKB-UniRule"/>
</dbReference>
<dbReference type="GO" id="GO:0043571">
    <property type="term" value="P:maintenance of CRISPR repeat elements"/>
    <property type="evidence" value="ECO:0007669"/>
    <property type="project" value="UniProtKB-UniRule"/>
</dbReference>
<dbReference type="CDD" id="cd09643">
    <property type="entry name" value="Csn1"/>
    <property type="match status" value="1"/>
</dbReference>
<dbReference type="Gene3D" id="3.30.420.10">
    <property type="entry name" value="Ribonuclease H-like superfamily/Ribonuclease H"/>
    <property type="match status" value="3"/>
</dbReference>
<dbReference type="HAMAP" id="MF_01480">
    <property type="entry name" value="Cas9"/>
    <property type="match status" value="1"/>
</dbReference>
<dbReference type="InterPro" id="IPR028629">
    <property type="entry name" value="Cas9"/>
</dbReference>
<dbReference type="InterPro" id="IPR033114">
    <property type="entry name" value="HNH_CAS9"/>
</dbReference>
<dbReference type="InterPro" id="IPR003615">
    <property type="entry name" value="HNH_nuc"/>
</dbReference>
<dbReference type="InterPro" id="IPR036397">
    <property type="entry name" value="RNaseH_sf"/>
</dbReference>
<dbReference type="InterPro" id="IPR041383">
    <property type="entry name" value="RuvC_III"/>
</dbReference>
<dbReference type="NCBIfam" id="TIGR01865">
    <property type="entry name" value="cas_Csn1"/>
    <property type="match status" value="1"/>
</dbReference>
<dbReference type="Pfam" id="PF13395">
    <property type="entry name" value="HNH_4"/>
    <property type="match status" value="1"/>
</dbReference>
<dbReference type="Pfam" id="PF18541">
    <property type="entry name" value="RuvC_III"/>
    <property type="match status" value="2"/>
</dbReference>
<dbReference type="PROSITE" id="PS51749">
    <property type="entry name" value="HNH_CAS9"/>
    <property type="match status" value="1"/>
</dbReference>
<sequence>MAAFKPNSINYILGLDIGIASVGWAMVEIDEEENPIRLIDLGVRVFERAEVPKTGDSLAMARRLARSVRRLTRRRAHRLLRTRRLLKREGVLQAANFDENGLIKSLPNTPWQLRAAALDRKLTPLEWSAVLLHLIKHRGYLSQRKNEGETADKELGALLKGVAGNAHALQTGDFRTPAELALNKFEKESGHIRNQRSDYSHTFSRKDLQAELILLFEKQKEFGNPHVSGGLKEGIETLLMTQRPALSGDAVQKMLGHCTFEPAEPKAAKNTYTAERFIWLTKLNNLRILEQGSERPLTDTERATLMDEPYRKSKLTYAQARKLLGLEDTAFFKGLRYGKDNAEASTLMEMKAYHAISRALEKEGLKDKKSPLNLSPELQDEIGTAFSLFKTDEDITGRLKDRIQPEILEALLKHISFDKFVQISLKALRRIVPLMEQGKRYDEACAEIYGDHYGKKNTEEKIYLPPIPADEIRNPVVLRALSQARKVINGVVRRYGSPARIHIETAREVGKSFKDRKEIEKRQEENRKDREKAAAKFREYFPNFVGEPKSKDILKLRLYEQQHGKCLYSGKEINLGRLNEKGYVEIDHALPFSRTWDDSFNNKVLVLGSENQNKGNQTPYEYFNGKDNSREWQEFKARVETSRFPRSKKQRILLQKFDEDGFKERNLNDTRYVNRFLCQFVADRMRLTGKGKKRVFASNGQITNLLRGFWGLRKVRAENDRHHALDAVVVACSTVAMQQKITRFVRYKEMNAFDGKTIDKETGEVLHQKTHFPQPWEFFAQEVMIRVFGKPDGKPEFEEADTLEKLRTLLAEKLSSRPEAVHEYVTPLFVSRAPNRKMSGQGHMETVKSAKRLDEGVSVLRVPLTQLKLKDLEKMVNREREPKLYEALKARLEAHKDDPAKAFAEPFYKYDKAGNRTQQVKAVRVEQVQKTGVWVRNHNGIADNATMVRVDVFEKGDKYYLVPIYSWQVAKGILPDRAVVQGKDEEDWQLIDDSFNFKFSLHPNDLVEVITKKARMFGYFASCHRGTGNINIRIHDLDHKIGKNGILEGIGVKTALSFQKYQIDELGKEIRPCRLKKRPPVR</sequence>
<gene>
    <name evidence="1" type="primary">cas9</name>
    <name type="ordered locus">NMV_1993</name>
</gene>
<proteinExistence type="evidence at protein level"/>
<feature type="chain" id="PRO_0000429986" description="CRISPR-associated endonuclease Cas9">
    <location>
        <begin position="1"/>
        <end position="1082"/>
    </location>
</feature>
<feature type="domain" description="HNH Cas9-type" evidence="2">
    <location>
        <begin position="512"/>
        <end position="667"/>
    </location>
</feature>
<feature type="active site" description="For RuvC-like nuclease domain" evidence="1">
    <location>
        <position position="16"/>
    </location>
</feature>
<feature type="active site" description="Proton acceptor for HNH nuclease domain" evidence="1">
    <location>
        <position position="588"/>
    </location>
</feature>
<feature type="binding site" evidence="1">
    <location>
        <position position="16"/>
    </location>
    <ligand>
        <name>Mg(2+)</name>
        <dbReference type="ChEBI" id="CHEBI:18420"/>
        <label>1</label>
    </ligand>
</feature>
<feature type="binding site" evidence="1">
    <location>
        <position position="16"/>
    </location>
    <ligand>
        <name>Mg(2+)</name>
        <dbReference type="ChEBI" id="CHEBI:18420"/>
        <label>2</label>
    </ligand>
</feature>
<feature type="binding site" evidence="1">
    <location>
        <position position="504"/>
    </location>
    <ligand>
        <name>Mg(2+)</name>
        <dbReference type="ChEBI" id="CHEBI:18420"/>
        <label>1</label>
    </ligand>
</feature>
<feature type="binding site" evidence="1">
    <location>
        <position position="508"/>
    </location>
    <ligand>
        <name>Mg(2+)</name>
        <dbReference type="ChEBI" id="CHEBI:18420"/>
        <label>1</label>
    </ligand>
</feature>
<feature type="binding site" evidence="1">
    <location>
        <position position="508"/>
    </location>
    <ligand>
        <name>Mg(2+)</name>
        <dbReference type="ChEBI" id="CHEBI:18420"/>
        <label>2</label>
    </ligand>
</feature>
<feature type="binding site" evidence="1">
    <location>
        <position position="723"/>
    </location>
    <ligand>
        <name>Mg(2+)</name>
        <dbReference type="ChEBI" id="CHEBI:18420"/>
        <label>2</label>
    </ligand>
</feature>
<feature type="mutagenesis site" description="Does not restore CRISPR interference during plasmid transformation to deletion mutant." evidence="3">
    <original>D</original>
    <variation>A</variation>
    <location>
        <position position="16"/>
    </location>
</feature>
<feature type="mutagenesis site" description="Does not restore CRISPR interference during plasmid transformation to deletion mutant." evidence="3">
    <original>H</original>
    <variation>A</variation>
    <location>
        <position position="588"/>
    </location>
</feature>
<feature type="strand" evidence="13">
    <location>
        <begin position="11"/>
        <end position="17"/>
    </location>
</feature>
<feature type="helix" evidence="6">
    <location>
        <begin position="18"/>
        <end position="21"/>
    </location>
</feature>
<feature type="strand" evidence="6">
    <location>
        <begin position="22"/>
        <end position="26"/>
    </location>
</feature>
<feature type="strand" evidence="10">
    <location>
        <begin position="31"/>
        <end position="33"/>
    </location>
</feature>
<feature type="helix" evidence="9">
    <location>
        <begin position="38"/>
        <end position="41"/>
    </location>
</feature>
<feature type="strand" evidence="9">
    <location>
        <begin position="47"/>
        <end position="50"/>
    </location>
</feature>
<feature type="turn" evidence="7">
    <location>
        <begin position="52"/>
        <end position="54"/>
    </location>
</feature>
<feature type="helix" evidence="9">
    <location>
        <begin position="56"/>
        <end position="73"/>
    </location>
</feature>
<feature type="turn" evidence="11">
    <location>
        <begin position="89"/>
        <end position="92"/>
    </location>
</feature>
<feature type="strand" evidence="13">
    <location>
        <begin position="94"/>
        <end position="97"/>
    </location>
</feature>
<feature type="strand" evidence="10">
    <location>
        <begin position="99"/>
        <end position="101"/>
    </location>
</feature>
<feature type="strand" evidence="12">
    <location>
        <begin position="103"/>
        <end position="105"/>
    </location>
</feature>
<feature type="helix" evidence="13">
    <location>
        <begin position="110"/>
        <end position="116"/>
    </location>
</feature>
<feature type="turn" evidence="13">
    <location>
        <begin position="117"/>
        <end position="119"/>
    </location>
</feature>
<feature type="helix" evidence="13">
    <location>
        <begin position="124"/>
        <end position="136"/>
    </location>
</feature>
<feature type="helix" evidence="7">
    <location>
        <begin position="153"/>
        <end position="171"/>
    </location>
</feature>
<feature type="helix" evidence="13">
    <location>
        <begin position="177"/>
        <end position="188"/>
    </location>
</feature>
<feature type="strand" evidence="13">
    <location>
        <begin position="196"/>
        <end position="198"/>
    </location>
</feature>
<feature type="helix" evidence="14">
    <location>
        <begin position="199"/>
        <end position="201"/>
    </location>
</feature>
<feature type="helix" evidence="13">
    <location>
        <begin position="205"/>
        <end position="221"/>
    </location>
</feature>
<feature type="strand" evidence="14">
    <location>
        <begin position="225"/>
        <end position="227"/>
    </location>
</feature>
<feature type="helix" evidence="13">
    <location>
        <begin position="230"/>
        <end position="240"/>
    </location>
</feature>
<feature type="helix" evidence="13">
    <location>
        <begin position="248"/>
        <end position="250"/>
    </location>
</feature>
<feature type="turn" evidence="13">
    <location>
        <begin position="251"/>
        <end position="254"/>
    </location>
</feature>
<feature type="strand" evidence="13">
    <location>
        <begin position="259"/>
        <end position="261"/>
    </location>
</feature>
<feature type="strand" evidence="11">
    <location>
        <begin position="264"/>
        <end position="266"/>
    </location>
</feature>
<feature type="strand" evidence="7">
    <location>
        <begin position="268"/>
        <end position="271"/>
    </location>
</feature>
<feature type="helix" evidence="13">
    <location>
        <begin position="272"/>
        <end position="285"/>
    </location>
</feature>
<feature type="strand" evidence="13">
    <location>
        <begin position="287"/>
        <end position="289"/>
    </location>
</feature>
<feature type="strand" evidence="13">
    <location>
        <begin position="294"/>
        <end position="296"/>
    </location>
</feature>
<feature type="helix" evidence="13">
    <location>
        <begin position="299"/>
        <end position="305"/>
    </location>
</feature>
<feature type="helix" evidence="13">
    <location>
        <begin position="308"/>
        <end position="311"/>
    </location>
</feature>
<feature type="strand" evidence="14">
    <location>
        <begin position="312"/>
        <end position="316"/>
    </location>
</feature>
<feature type="helix" evidence="13">
    <location>
        <begin position="317"/>
        <end position="323"/>
    </location>
</feature>
<feature type="strand" evidence="7">
    <location>
        <begin position="330"/>
        <end position="332"/>
    </location>
</feature>
<feature type="strand" evidence="13">
    <location>
        <begin position="338"/>
        <end position="340"/>
    </location>
</feature>
<feature type="helix" evidence="13">
    <location>
        <begin position="342"/>
        <end position="344"/>
    </location>
</feature>
<feature type="strand" evidence="13">
    <location>
        <begin position="345"/>
        <end position="348"/>
    </location>
</feature>
<feature type="helix" evidence="13">
    <location>
        <begin position="351"/>
        <end position="362"/>
    </location>
</feature>
<feature type="strand" evidence="13">
    <location>
        <begin position="368"/>
        <end position="370"/>
    </location>
</feature>
<feature type="helix" evidence="13">
    <location>
        <begin position="376"/>
        <end position="388"/>
    </location>
</feature>
<feature type="helix" evidence="13">
    <location>
        <begin position="392"/>
        <end position="399"/>
    </location>
</feature>
<feature type="turn" evidence="13">
    <location>
        <begin position="400"/>
        <end position="402"/>
    </location>
</feature>
<feature type="helix" evidence="13">
    <location>
        <begin position="405"/>
        <end position="412"/>
    </location>
</feature>
<feature type="strand" evidence="10">
    <location>
        <begin position="420"/>
        <end position="424"/>
    </location>
</feature>
<feature type="helix" evidence="13">
    <location>
        <begin position="425"/>
        <end position="436"/>
    </location>
</feature>
<feature type="helix" evidence="13">
    <location>
        <begin position="441"/>
        <end position="449"/>
    </location>
</feature>
<feature type="strand" evidence="13">
    <location>
        <begin position="450"/>
        <end position="453"/>
    </location>
</feature>
<feature type="strand" evidence="7">
    <location>
        <begin position="461"/>
        <end position="463"/>
    </location>
</feature>
<feature type="strand" evidence="13">
    <location>
        <begin position="469"/>
        <end position="471"/>
    </location>
</feature>
<feature type="helix" evidence="13">
    <location>
        <begin position="475"/>
        <end position="495"/>
    </location>
</feature>
<feature type="strand" evidence="13">
    <location>
        <begin position="499"/>
        <end position="506"/>
    </location>
</feature>
<feature type="turn" evidence="7">
    <location>
        <begin position="507"/>
        <end position="510"/>
    </location>
</feature>
<feature type="helix" evidence="13">
    <location>
        <begin position="513"/>
        <end position="540"/>
    </location>
</feature>
<feature type="strand" evidence="7">
    <location>
        <begin position="541"/>
        <end position="543"/>
    </location>
</feature>
<feature type="strand" evidence="11">
    <location>
        <begin position="545"/>
        <end position="547"/>
    </location>
</feature>
<feature type="helix" evidence="13">
    <location>
        <begin position="551"/>
        <end position="559"/>
    </location>
</feature>
<feature type="turn" evidence="13">
    <location>
        <begin position="560"/>
        <end position="564"/>
    </location>
</feature>
<feature type="turn" evidence="13">
    <location>
        <begin position="567"/>
        <end position="569"/>
    </location>
</feature>
<feature type="helix" evidence="7">
    <location>
        <begin position="575"/>
        <end position="577"/>
    </location>
</feature>
<feature type="strand" evidence="13">
    <location>
        <begin position="578"/>
        <end position="580"/>
    </location>
</feature>
<feature type="strand" evidence="13">
    <location>
        <begin position="583"/>
        <end position="590"/>
    </location>
</feature>
<feature type="turn" evidence="13">
    <location>
        <begin position="592"/>
        <end position="594"/>
    </location>
</feature>
<feature type="strand" evidence="13">
    <location>
        <begin position="602"/>
        <end position="607"/>
    </location>
</feature>
<feature type="helix" evidence="13">
    <location>
        <begin position="609"/>
        <end position="612"/>
    </location>
</feature>
<feature type="helix" evidence="13">
    <location>
        <begin position="619"/>
        <end position="622"/>
    </location>
</feature>
<feature type="turn" evidence="13">
    <location>
        <begin position="623"/>
        <end position="626"/>
    </location>
</feature>
<feature type="helix" evidence="13">
    <location>
        <begin position="630"/>
        <end position="640"/>
    </location>
</feature>
<feature type="helix" evidence="13">
    <location>
        <begin position="646"/>
        <end position="652"/>
    </location>
</feature>
<feature type="helix" evidence="14">
    <location>
        <begin position="659"/>
        <end position="665"/>
    </location>
</feature>
<feature type="helix" evidence="13">
    <location>
        <begin position="667"/>
        <end position="684"/>
    </location>
</feature>
<feature type="strand" evidence="13">
    <location>
        <begin position="690"/>
        <end position="692"/>
    </location>
</feature>
<feature type="strand" evidence="13">
    <location>
        <begin position="695"/>
        <end position="699"/>
    </location>
</feature>
<feature type="helix" evidence="13">
    <location>
        <begin position="700"/>
        <end position="709"/>
    </location>
</feature>
<feature type="strand" evidence="7">
    <location>
        <begin position="716"/>
        <end position="719"/>
    </location>
</feature>
<feature type="helix" evidence="13">
    <location>
        <begin position="722"/>
        <end position="732"/>
    </location>
</feature>
<feature type="helix" evidence="13">
    <location>
        <begin position="735"/>
        <end position="747"/>
    </location>
</feature>
<feature type="turn" evidence="13">
    <location>
        <begin position="752"/>
        <end position="754"/>
    </location>
</feature>
<feature type="turn" evidence="7">
    <location>
        <begin position="759"/>
        <end position="762"/>
    </location>
</feature>
<feature type="strand" evidence="11">
    <location>
        <begin position="767"/>
        <end position="769"/>
    </location>
</feature>
<feature type="strand" evidence="13">
    <location>
        <begin position="775"/>
        <end position="778"/>
    </location>
</feature>
<feature type="helix" evidence="13">
    <location>
        <begin position="779"/>
        <end position="788"/>
    </location>
</feature>
<feature type="helix" evidence="13">
    <location>
        <begin position="803"/>
        <end position="813"/>
    </location>
</feature>
<feature type="turn" evidence="7">
    <location>
        <begin position="814"/>
        <end position="816"/>
    </location>
</feature>
<feature type="strand" evidence="13">
    <location>
        <begin position="820"/>
        <end position="822"/>
    </location>
</feature>
<feature type="strand" evidence="7">
    <location>
        <begin position="843"/>
        <end position="849"/>
    </location>
</feature>
<feature type="helix" evidence="13">
    <location>
        <begin position="853"/>
        <end position="855"/>
    </location>
</feature>
<feature type="strand" evidence="13">
    <location>
        <begin position="857"/>
        <end position="863"/>
    </location>
</feature>
<feature type="helix" evidence="13">
    <location>
        <begin position="864"/>
        <end position="866"/>
    </location>
</feature>
<feature type="helix" evidence="13">
    <location>
        <begin position="869"/>
        <end position="872"/>
    </location>
</feature>
<feature type="helix" evidence="13">
    <location>
        <begin position="876"/>
        <end position="878"/>
    </location>
</feature>
<feature type="strand" evidence="14">
    <location>
        <begin position="879"/>
        <end position="881"/>
    </location>
</feature>
<feature type="helix" evidence="13">
    <location>
        <begin position="882"/>
        <end position="894"/>
    </location>
</feature>
<feature type="turn" evidence="13">
    <location>
        <begin position="895"/>
        <end position="897"/>
    </location>
</feature>
<feature type="helix" evidence="13">
    <location>
        <begin position="899"/>
        <end position="902"/>
    </location>
</feature>
<feature type="strand" evidence="13">
    <location>
        <begin position="907"/>
        <end position="910"/>
    </location>
</feature>
<feature type="strand" evidence="13">
    <location>
        <begin position="912"/>
        <end position="914"/>
    </location>
</feature>
<feature type="strand" evidence="13">
    <location>
        <begin position="916"/>
        <end position="928"/>
    </location>
</feature>
<feature type="strand" evidence="13">
    <location>
        <begin position="933"/>
        <end position="935"/>
    </location>
</feature>
<feature type="turn" evidence="13">
    <location>
        <begin position="936"/>
        <end position="939"/>
    </location>
</feature>
<feature type="strand" evidence="13">
    <location>
        <begin position="940"/>
        <end position="942"/>
    </location>
</feature>
<feature type="strand" evidence="13">
    <location>
        <begin position="947"/>
        <end position="955"/>
    </location>
</feature>
<feature type="strand" evidence="13">
    <location>
        <begin position="958"/>
        <end position="965"/>
    </location>
</feature>
<feature type="helix" evidence="13">
    <location>
        <begin position="966"/>
        <end position="970"/>
    </location>
</feature>
<feature type="strand" evidence="7">
    <location>
        <begin position="981"/>
        <end position="983"/>
    </location>
</feature>
<feature type="helix" evidence="13">
    <location>
        <begin position="985"/>
        <end position="987"/>
    </location>
</feature>
<feature type="strand" evidence="13">
    <location>
        <begin position="988"/>
        <end position="990"/>
    </location>
</feature>
<feature type="strand" evidence="13">
    <location>
        <begin position="995"/>
        <end position="1001"/>
    </location>
</feature>
<feature type="strand" evidence="13">
    <location>
        <begin position="1006"/>
        <end position="1010"/>
    </location>
</feature>
<feature type="strand" evidence="13">
    <location>
        <begin position="1015"/>
        <end position="1023"/>
    </location>
</feature>
<feature type="turn" evidence="13">
    <location>
        <begin position="1025"/>
        <end position="1027"/>
    </location>
</feature>
<feature type="strand" evidence="13">
    <location>
        <begin position="1030"/>
        <end position="1033"/>
    </location>
</feature>
<feature type="turn" evidence="13">
    <location>
        <begin position="1039"/>
        <end position="1042"/>
    </location>
</feature>
<feature type="strand" evidence="13">
    <location>
        <begin position="1046"/>
        <end position="1050"/>
    </location>
</feature>
<feature type="strand" evidence="13">
    <location>
        <begin position="1056"/>
        <end position="1062"/>
    </location>
</feature>
<feature type="strand" evidence="8">
    <location>
        <begin position="1065"/>
        <end position="1067"/>
    </location>
</feature>
<feature type="strand" evidence="10">
    <location>
        <begin position="1071"/>
        <end position="1073"/>
    </location>
</feature>
<reference key="1">
    <citation type="journal article" date="2009" name="Genome Biol.">
        <title>NeMeSys: a biological resource for narrowing the gap between sequence and function in the human pathogen Neisseria meningitidis.</title>
        <authorList>
            <person name="Rusniok C."/>
            <person name="Vallenet D."/>
            <person name="Floquet S."/>
            <person name="Ewles H."/>
            <person name="Mouze-Soulama C."/>
            <person name="Brown D."/>
            <person name="Lajus A."/>
            <person name="Buchrieser C."/>
            <person name="Medigue C."/>
            <person name="Glaser P."/>
            <person name="Pelicic V."/>
        </authorList>
    </citation>
    <scope>NUCLEOTIDE SEQUENCE [LARGE SCALE GENOMIC DNA]</scope>
    <source>
        <strain>8013</strain>
    </source>
</reference>
<reference key="2">
    <citation type="journal article" date="2013" name="Mol. Cell">
        <title>Processing-independent CRISPR RNAs limit natural transformation in Neisseria meningitidis.</title>
        <authorList>
            <person name="Zhang Y."/>
            <person name="Heidrich N."/>
            <person name="Ampattu B.J."/>
            <person name="Gunderson C.W."/>
            <person name="Seifert H.S."/>
            <person name="Schoen C."/>
            <person name="Vogel J."/>
            <person name="Sontheimer E.J."/>
        </authorList>
    </citation>
    <scope>FUNCTION IN PLASMID RESISTANCE</scope>
    <scope>DISRUPTION PHENOTYPE</scope>
    <scope>MUTAGENESIS OF ASP-16 AND HIS-588</scope>
    <source>
        <strain>8013</strain>
    </source>
</reference>
<reference key="3">
    <citation type="journal article" date="2013" name="Proc. Natl. Acad. Sci. U.S.A.">
        <title>Efficient genome engineering in human pluripotent stem cells using Cas9 from Neisseria meningitidis.</title>
        <authorList>
            <person name="Hou Z."/>
            <person name="Zhang Y."/>
            <person name="Propson N.E."/>
            <person name="Howden S.E."/>
            <person name="Chu L.F."/>
            <person name="Sontheimer E.J."/>
            <person name="Thomson J.A."/>
        </authorList>
    </citation>
    <scope>FUNCTION AS AN ENDONUCLEASE</scope>
    <scope>BIOTECHNOLOGY IN HUMAN CELLS</scope>
    <source>
        <strain>8013</strain>
    </source>
</reference>
<reference key="4">
    <citation type="journal article" date="2023" name="Nat. Commun.">
        <title>Assessing and advancing the safety of CRISPR-Cas tools: from DNA to RNA editing.</title>
        <authorList>
            <person name="Tao J."/>
            <person name="Bauer D.E."/>
            <person name="Chiarle R."/>
        </authorList>
    </citation>
    <scope>REVIEW ON SAFETY OF GENOME EDITING TOOLS</scope>
</reference>
<comment type="function">
    <text evidence="3 4">CRISPR (clustered regularly interspaced short palindromic repeat) is an adaptive immune system that provides protection against mobile genetic elements (viruses, transposable elements and conjugative plasmids). CRISPR clusters contain spacers, sequences complementary to antecedent mobile elements, and target invading nucleic acids. CRISPR clusters are transcribed and processed into CRISPR RNA (crRNA). In type II CRISPR systems correct processing of pre-crRNA requires a trans-encoded small RNA (tracrRNA), endogenous ribonuclease 3 (rnc) and this protein, although RNase 3 is not required for 5'-processing of crRNA in this strain. Cas9/crRNA/tracrRNA endonucleolytically cleaves linear or circular dsDNA target complementary to the spacer; Cas9 is inactive in the absence of the 2 guide RNAs (gRNA, PubMed:23940360). Cas9 recognizes the protospacer adjacent motif (PAM) in the CRISPR repeat sequences to help distinguish self versus nonself, as targets within the bacterial CRISPR locus do not have PAMs. PAM recognition is also required for catalytic activity. Plasmids containing sequences homologous to endogenous spacer elements and that have flanking PAM consensus sequences cannot transform this strain unless the cas9 gene is disrupted or critical residues of Cas9 are mutated.</text>
</comment>
<comment type="cofactor">
    <cofactor evidence="1">
        <name>Mg(2+)</name>
        <dbReference type="ChEBI" id="CHEBI:18420"/>
    </cofactor>
</comment>
<comment type="subunit">
    <text evidence="5">Monomer. Binds crRNA and tracrRNA (Probable).</text>
</comment>
<comment type="domain">
    <text evidence="1">Has 2 endonuclease domains. The discontinuous RuvC-like domain cleaves the target DNA noncomplementary to crRNA while the HNH nuclease domain cleaves the target DNA complementary to crRNA.</text>
</comment>
<comment type="disruption phenotype">
    <text evidence="3">Almost no mature crRNA or tracrRNA produced. Loss of CRISPR interference during plasmid transformation.</text>
</comment>
<comment type="biotechnology">
    <text evidence="4">Coexpression with both gRNAs or a synthetic gRNA in human embryonic or pluripotent stem cells shows it is possible to target and modify a DNA sequence of interest.</text>
</comment>
<comment type="similarity">
    <text evidence="5">Belongs to the CRISPR-associated protein Cas9 family. Subtype II-C subfamily.</text>
</comment>
<name>CAS9_NEIM8</name>
<organism>
    <name type="scientific">Neisseria meningitidis serogroup C (strain 8013)</name>
    <dbReference type="NCBI Taxonomy" id="604162"/>
    <lineage>
        <taxon>Bacteria</taxon>
        <taxon>Pseudomonadati</taxon>
        <taxon>Pseudomonadota</taxon>
        <taxon>Betaproteobacteria</taxon>
        <taxon>Neisseriales</taxon>
        <taxon>Neisseriaceae</taxon>
        <taxon>Neisseria</taxon>
    </lineage>
</organism>